<gene>
    <name evidence="1" type="primary">aroA</name>
    <name type="ordered locus">BT_0084</name>
</gene>
<protein>
    <recommendedName>
        <fullName evidence="1">3-phosphoshikimate 1-carboxyvinyltransferase</fullName>
        <ecNumber evidence="1">2.5.1.19</ecNumber>
    </recommendedName>
    <alternativeName>
        <fullName evidence="1">5-enolpyruvylshikimate-3-phosphate synthase</fullName>
        <shortName evidence="1">EPSP synthase</shortName>
        <shortName evidence="1">EPSPS</shortName>
    </alternativeName>
</protein>
<proteinExistence type="inferred from homology"/>
<evidence type="ECO:0000255" key="1">
    <source>
        <dbReference type="HAMAP-Rule" id="MF_00210"/>
    </source>
</evidence>
<organism>
    <name type="scientific">Bartonella tribocorum (strain CIP 105476 / IBS 506)</name>
    <dbReference type="NCBI Taxonomy" id="382640"/>
    <lineage>
        <taxon>Bacteria</taxon>
        <taxon>Pseudomonadati</taxon>
        <taxon>Pseudomonadota</taxon>
        <taxon>Alphaproteobacteria</taxon>
        <taxon>Hyphomicrobiales</taxon>
        <taxon>Bartonellaceae</taxon>
        <taxon>Bartonella</taxon>
    </lineage>
</organism>
<keyword id="KW-0028">Amino-acid biosynthesis</keyword>
<keyword id="KW-0057">Aromatic amino acid biosynthesis</keyword>
<keyword id="KW-0963">Cytoplasm</keyword>
<keyword id="KW-0808">Transferase</keyword>
<sequence>MQKAIPITAYKSSSLSGKIRIPGDKSISHRSLILGGLANGETYIHGLLESADVLNTASAMQAMGACIIKKDDFWIIRGTGNGCLLAAQKPLDFGNAGTGARLVMGMVGPYHMKTTFIGDASLSKRPMGRILDPLRLMGVEIEATHGDHLPLTLYGPKMANPIRYHVPIASSQVKSAILLAGLNTAGITTVIEPVLTRDHTEKMLKAFGATLEIERDKEGARLIHLYGHPHLTGQTIHIPGDPSSAAFLIIAALLVEDSDITIENVLINNSRIGLIETLWEMGAHIEFLNQRQTGGEDVADLRIKSSVLKGVTVPKERAPSMIDEYPALAVAAAFAEGKTVMLGIEELRVKESDRLSAVAQGLKINCVDCEEGQDFLVVYGKGSAKGLGGGYVSTHLDHRIAMCFLTFGLVSEKPVTIDDQRMIATSFPEFIPFIKQLGGKIA</sequence>
<comment type="function">
    <text evidence="1">Catalyzes the transfer of the enolpyruvyl moiety of phosphoenolpyruvate (PEP) to the 5-hydroxyl of shikimate-3-phosphate (S3P) to produce enolpyruvyl shikimate-3-phosphate and inorganic phosphate.</text>
</comment>
<comment type="catalytic activity">
    <reaction evidence="1">
        <text>3-phosphoshikimate + phosphoenolpyruvate = 5-O-(1-carboxyvinyl)-3-phosphoshikimate + phosphate</text>
        <dbReference type="Rhea" id="RHEA:21256"/>
        <dbReference type="ChEBI" id="CHEBI:43474"/>
        <dbReference type="ChEBI" id="CHEBI:57701"/>
        <dbReference type="ChEBI" id="CHEBI:58702"/>
        <dbReference type="ChEBI" id="CHEBI:145989"/>
        <dbReference type="EC" id="2.5.1.19"/>
    </reaction>
    <physiologicalReaction direction="left-to-right" evidence="1">
        <dbReference type="Rhea" id="RHEA:21257"/>
    </physiologicalReaction>
</comment>
<comment type="pathway">
    <text evidence="1">Metabolic intermediate biosynthesis; chorismate biosynthesis; chorismate from D-erythrose 4-phosphate and phosphoenolpyruvate: step 6/7.</text>
</comment>
<comment type="subunit">
    <text evidence="1">Monomer.</text>
</comment>
<comment type="subcellular location">
    <subcellularLocation>
        <location evidence="1">Cytoplasm</location>
    </subcellularLocation>
</comment>
<comment type="similarity">
    <text evidence="1">Belongs to the EPSP synthase family.</text>
</comment>
<dbReference type="EC" id="2.5.1.19" evidence="1"/>
<dbReference type="EMBL" id="AM260525">
    <property type="protein sequence ID" value="CAK00579.1"/>
    <property type="molecule type" value="Genomic_DNA"/>
</dbReference>
<dbReference type="RefSeq" id="WP_012230402.1">
    <property type="nucleotide sequence ID" value="NC_010161.1"/>
</dbReference>
<dbReference type="SMR" id="A9ILL7"/>
<dbReference type="KEGG" id="btr:BT_0084"/>
<dbReference type="eggNOG" id="COG0128">
    <property type="taxonomic scope" value="Bacteria"/>
</dbReference>
<dbReference type="HOGENOM" id="CLU_024321_0_1_5"/>
<dbReference type="UniPathway" id="UPA00053">
    <property type="reaction ID" value="UER00089"/>
</dbReference>
<dbReference type="Proteomes" id="UP000001592">
    <property type="component" value="Chromosome"/>
</dbReference>
<dbReference type="GO" id="GO:0005737">
    <property type="term" value="C:cytoplasm"/>
    <property type="evidence" value="ECO:0007669"/>
    <property type="project" value="UniProtKB-SubCell"/>
</dbReference>
<dbReference type="GO" id="GO:0003866">
    <property type="term" value="F:3-phosphoshikimate 1-carboxyvinyltransferase activity"/>
    <property type="evidence" value="ECO:0007669"/>
    <property type="project" value="UniProtKB-UniRule"/>
</dbReference>
<dbReference type="GO" id="GO:0008652">
    <property type="term" value="P:amino acid biosynthetic process"/>
    <property type="evidence" value="ECO:0007669"/>
    <property type="project" value="UniProtKB-KW"/>
</dbReference>
<dbReference type="GO" id="GO:0009073">
    <property type="term" value="P:aromatic amino acid family biosynthetic process"/>
    <property type="evidence" value="ECO:0007669"/>
    <property type="project" value="UniProtKB-KW"/>
</dbReference>
<dbReference type="GO" id="GO:0009423">
    <property type="term" value="P:chorismate biosynthetic process"/>
    <property type="evidence" value="ECO:0007669"/>
    <property type="project" value="UniProtKB-UniRule"/>
</dbReference>
<dbReference type="CDD" id="cd01556">
    <property type="entry name" value="EPSP_synthase"/>
    <property type="match status" value="1"/>
</dbReference>
<dbReference type="FunFam" id="3.65.10.10:FF:000005">
    <property type="entry name" value="3-phosphoshikimate 1-carboxyvinyltransferase"/>
    <property type="match status" value="1"/>
</dbReference>
<dbReference type="Gene3D" id="3.65.10.10">
    <property type="entry name" value="Enolpyruvate transferase domain"/>
    <property type="match status" value="2"/>
</dbReference>
<dbReference type="HAMAP" id="MF_00210">
    <property type="entry name" value="EPSP_synth"/>
    <property type="match status" value="1"/>
</dbReference>
<dbReference type="InterPro" id="IPR001986">
    <property type="entry name" value="Enolpyruvate_Tfrase_dom"/>
</dbReference>
<dbReference type="InterPro" id="IPR036968">
    <property type="entry name" value="Enolpyruvate_Tfrase_sf"/>
</dbReference>
<dbReference type="InterPro" id="IPR006264">
    <property type="entry name" value="EPSP_synthase"/>
</dbReference>
<dbReference type="InterPro" id="IPR023193">
    <property type="entry name" value="EPSP_synthase_CS"/>
</dbReference>
<dbReference type="InterPro" id="IPR013792">
    <property type="entry name" value="RNA3'P_cycl/enolpyr_Trfase_a/b"/>
</dbReference>
<dbReference type="NCBIfam" id="TIGR01356">
    <property type="entry name" value="aroA"/>
    <property type="match status" value="1"/>
</dbReference>
<dbReference type="PANTHER" id="PTHR21090">
    <property type="entry name" value="AROM/DEHYDROQUINATE SYNTHASE"/>
    <property type="match status" value="1"/>
</dbReference>
<dbReference type="PANTHER" id="PTHR21090:SF5">
    <property type="entry name" value="PENTAFUNCTIONAL AROM POLYPEPTIDE"/>
    <property type="match status" value="1"/>
</dbReference>
<dbReference type="Pfam" id="PF00275">
    <property type="entry name" value="EPSP_synthase"/>
    <property type="match status" value="1"/>
</dbReference>
<dbReference type="PIRSF" id="PIRSF000505">
    <property type="entry name" value="EPSPS"/>
    <property type="match status" value="1"/>
</dbReference>
<dbReference type="SUPFAM" id="SSF55205">
    <property type="entry name" value="EPT/RTPC-like"/>
    <property type="match status" value="1"/>
</dbReference>
<dbReference type="PROSITE" id="PS00104">
    <property type="entry name" value="EPSP_SYNTHASE_1"/>
    <property type="match status" value="1"/>
</dbReference>
<feature type="chain" id="PRO_1000077980" description="3-phosphoshikimate 1-carboxyvinyltransferase">
    <location>
        <begin position="1"/>
        <end position="442"/>
    </location>
</feature>
<feature type="active site" description="Proton acceptor" evidence="1">
    <location>
        <position position="323"/>
    </location>
</feature>
<feature type="binding site" evidence="1">
    <location>
        <position position="25"/>
    </location>
    <ligand>
        <name>3-phosphoshikimate</name>
        <dbReference type="ChEBI" id="CHEBI:145989"/>
    </ligand>
</feature>
<feature type="binding site" evidence="1">
    <location>
        <position position="25"/>
    </location>
    <ligand>
        <name>phosphoenolpyruvate</name>
        <dbReference type="ChEBI" id="CHEBI:58702"/>
    </ligand>
</feature>
<feature type="binding site" evidence="1">
    <location>
        <position position="26"/>
    </location>
    <ligand>
        <name>3-phosphoshikimate</name>
        <dbReference type="ChEBI" id="CHEBI:145989"/>
    </ligand>
</feature>
<feature type="binding site" evidence="1">
    <location>
        <position position="30"/>
    </location>
    <ligand>
        <name>3-phosphoshikimate</name>
        <dbReference type="ChEBI" id="CHEBI:145989"/>
    </ligand>
</feature>
<feature type="binding site" evidence="1">
    <location>
        <position position="97"/>
    </location>
    <ligand>
        <name>phosphoenolpyruvate</name>
        <dbReference type="ChEBI" id="CHEBI:58702"/>
    </ligand>
</feature>
<feature type="binding site" evidence="1">
    <location>
        <position position="125"/>
    </location>
    <ligand>
        <name>phosphoenolpyruvate</name>
        <dbReference type="ChEBI" id="CHEBI:58702"/>
    </ligand>
</feature>
<feature type="binding site" evidence="1">
    <location>
        <position position="170"/>
    </location>
    <ligand>
        <name>3-phosphoshikimate</name>
        <dbReference type="ChEBI" id="CHEBI:145989"/>
    </ligand>
</feature>
<feature type="binding site" evidence="1">
    <location>
        <position position="171"/>
    </location>
    <ligand>
        <name>3-phosphoshikimate</name>
        <dbReference type="ChEBI" id="CHEBI:145989"/>
    </ligand>
</feature>
<feature type="binding site" evidence="1">
    <location>
        <position position="172"/>
    </location>
    <ligand>
        <name>3-phosphoshikimate</name>
        <dbReference type="ChEBI" id="CHEBI:145989"/>
    </ligand>
</feature>
<feature type="binding site" evidence="1">
    <location>
        <position position="172"/>
    </location>
    <ligand>
        <name>phosphoenolpyruvate</name>
        <dbReference type="ChEBI" id="CHEBI:58702"/>
    </ligand>
</feature>
<feature type="binding site" evidence="1">
    <location>
        <position position="323"/>
    </location>
    <ligand>
        <name>3-phosphoshikimate</name>
        <dbReference type="ChEBI" id="CHEBI:145989"/>
    </ligand>
</feature>
<feature type="binding site" evidence="1">
    <location>
        <position position="350"/>
    </location>
    <ligand>
        <name>3-phosphoshikimate</name>
        <dbReference type="ChEBI" id="CHEBI:145989"/>
    </ligand>
</feature>
<feature type="binding site" evidence="1">
    <location>
        <position position="354"/>
    </location>
    <ligand>
        <name>phosphoenolpyruvate</name>
        <dbReference type="ChEBI" id="CHEBI:58702"/>
    </ligand>
</feature>
<feature type="binding site" evidence="1">
    <location>
        <position position="399"/>
    </location>
    <ligand>
        <name>phosphoenolpyruvate</name>
        <dbReference type="ChEBI" id="CHEBI:58702"/>
    </ligand>
</feature>
<reference key="1">
    <citation type="journal article" date="2007" name="Nat. Genet.">
        <title>Genomic analysis of Bartonella identifies type IV secretion systems as host adaptability factors.</title>
        <authorList>
            <person name="Saenz H.L."/>
            <person name="Engel P."/>
            <person name="Stoeckli M.C."/>
            <person name="Lanz C."/>
            <person name="Raddatz G."/>
            <person name="Vayssier-Taussat M."/>
            <person name="Birtles R."/>
            <person name="Schuster S.C."/>
            <person name="Dehio C."/>
        </authorList>
    </citation>
    <scope>NUCLEOTIDE SEQUENCE [LARGE SCALE GENOMIC DNA]</scope>
    <source>
        <strain>CIP 105476 / IBS 506</strain>
    </source>
</reference>
<name>AROA_BART1</name>
<accession>A9ILL7</accession>